<accession>Q05F77</accession>
<dbReference type="EC" id="7.1.1.2"/>
<dbReference type="EMBL" id="AY582562">
    <property type="protein sequence ID" value="AAT35911.1"/>
    <property type="molecule type" value="Genomic_DNA"/>
</dbReference>
<dbReference type="SMR" id="Q05F77"/>
<dbReference type="GO" id="GO:0005743">
    <property type="term" value="C:mitochondrial inner membrane"/>
    <property type="evidence" value="ECO:0000250"/>
    <property type="project" value="UniProtKB"/>
</dbReference>
<dbReference type="GO" id="GO:0045271">
    <property type="term" value="C:respiratory chain complex I"/>
    <property type="evidence" value="ECO:0000250"/>
    <property type="project" value="UniProtKB"/>
</dbReference>
<dbReference type="GO" id="GO:0008137">
    <property type="term" value="F:NADH dehydrogenase (ubiquinone) activity"/>
    <property type="evidence" value="ECO:0000250"/>
    <property type="project" value="UniProtKB"/>
</dbReference>
<dbReference type="GO" id="GO:0042773">
    <property type="term" value="P:ATP synthesis coupled electron transport"/>
    <property type="evidence" value="ECO:0007669"/>
    <property type="project" value="InterPro"/>
</dbReference>
<dbReference type="FunFam" id="1.10.287.3510:FF:000002">
    <property type="entry name" value="NADH-ubiquinone oxidoreductase chain 4L"/>
    <property type="match status" value="1"/>
</dbReference>
<dbReference type="Gene3D" id="1.10.287.3510">
    <property type="match status" value="1"/>
</dbReference>
<dbReference type="InterPro" id="IPR001133">
    <property type="entry name" value="NADH_UbQ_OxRdtase_chain4L/K"/>
</dbReference>
<dbReference type="InterPro" id="IPR039428">
    <property type="entry name" value="NUOK/Mnh_C1-like"/>
</dbReference>
<dbReference type="PANTHER" id="PTHR11434:SF0">
    <property type="entry name" value="NADH-UBIQUINONE OXIDOREDUCTASE CHAIN 4L"/>
    <property type="match status" value="1"/>
</dbReference>
<dbReference type="PANTHER" id="PTHR11434">
    <property type="entry name" value="NADH-UBIQUINONE OXIDOREDUCTASE SUBUNIT ND4L"/>
    <property type="match status" value="1"/>
</dbReference>
<dbReference type="Pfam" id="PF00420">
    <property type="entry name" value="Oxidored_q2"/>
    <property type="match status" value="1"/>
</dbReference>
<evidence type="ECO:0000250" key="1">
    <source>
        <dbReference type="UniProtKB" id="P03901"/>
    </source>
</evidence>
<evidence type="ECO:0000250" key="2">
    <source>
        <dbReference type="UniProtKB" id="P03902"/>
    </source>
</evidence>
<evidence type="ECO:0000255" key="3"/>
<evidence type="ECO:0000305" key="4"/>
<reference key="1">
    <citation type="journal article" date="2006" name="Int. J. Primatol.">
        <title>Revision of the mouse lemurs (Microcebus) of Eastern Madagascar.</title>
        <authorList>
            <person name="Louis E.E. Jr."/>
            <person name="Coles M.S."/>
            <person name="Andriantompohavana R."/>
            <person name="Sommer J.A."/>
            <person name="Engberg S.E."/>
            <person name="Zaonarivelo J.R."/>
            <person name="Mayor M.I."/>
            <person name="Brenneman R.A."/>
        </authorList>
    </citation>
    <scope>NUCLEOTIDE SEQUENCE [GENOMIC DNA]</scope>
    <source>
        <strain>Isolate GAR8</strain>
    </source>
</reference>
<sequence length="98" mass="10882">MLSISMNMTLAFTTALLGMLMFRSHLMSSLLCLEGMMLSMFILSTLLILNMQYTITFMMPILLLVFAACEAAIGLALLVTVSNTYGLDYIQNLNLLQC</sequence>
<protein>
    <recommendedName>
        <fullName>NADH-ubiquinone oxidoreductase chain 4L</fullName>
        <ecNumber>7.1.1.2</ecNumber>
    </recommendedName>
    <alternativeName>
        <fullName>NADH dehydrogenase subunit 4L</fullName>
    </alternativeName>
</protein>
<geneLocation type="mitochondrion"/>
<organism>
    <name type="scientific">Cheirogaleus medius</name>
    <name type="common">Fat-tailed dwarf lemur</name>
    <dbReference type="NCBI Taxonomy" id="9460"/>
    <lineage>
        <taxon>Eukaryota</taxon>
        <taxon>Metazoa</taxon>
        <taxon>Chordata</taxon>
        <taxon>Craniata</taxon>
        <taxon>Vertebrata</taxon>
        <taxon>Euteleostomi</taxon>
        <taxon>Mammalia</taxon>
        <taxon>Eutheria</taxon>
        <taxon>Euarchontoglires</taxon>
        <taxon>Primates</taxon>
        <taxon>Strepsirrhini</taxon>
        <taxon>Lemuriformes</taxon>
        <taxon>Cheirogaleidae</taxon>
        <taxon>Cheirogaleus</taxon>
    </lineage>
</organism>
<name>NU4LM_CHEME</name>
<comment type="function">
    <text evidence="1">Core subunit of the mitochondrial membrane respiratory chain NADH dehydrogenase (Complex I) which catalyzes electron transfer from NADH through the respiratory chain, using ubiquinone as an electron acceptor. Part of the enzyme membrane arm which is embedded in the lipid bilayer and involved in proton translocation.</text>
</comment>
<comment type="catalytic activity">
    <reaction evidence="1">
        <text>a ubiquinone + NADH + 5 H(+)(in) = a ubiquinol + NAD(+) + 4 H(+)(out)</text>
        <dbReference type="Rhea" id="RHEA:29091"/>
        <dbReference type="Rhea" id="RHEA-COMP:9565"/>
        <dbReference type="Rhea" id="RHEA-COMP:9566"/>
        <dbReference type="ChEBI" id="CHEBI:15378"/>
        <dbReference type="ChEBI" id="CHEBI:16389"/>
        <dbReference type="ChEBI" id="CHEBI:17976"/>
        <dbReference type="ChEBI" id="CHEBI:57540"/>
        <dbReference type="ChEBI" id="CHEBI:57945"/>
        <dbReference type="EC" id="7.1.1.2"/>
    </reaction>
    <physiologicalReaction direction="left-to-right" evidence="1">
        <dbReference type="Rhea" id="RHEA:29092"/>
    </physiologicalReaction>
</comment>
<comment type="subunit">
    <text evidence="2">Core subunit of respiratory chain NADH dehydrogenase (Complex I) which is composed of 45 different subunits.</text>
</comment>
<comment type="subcellular location">
    <subcellularLocation>
        <location evidence="2">Mitochondrion inner membrane</location>
        <topology evidence="3">Multi-pass membrane protein</topology>
    </subcellularLocation>
</comment>
<comment type="similarity">
    <text evidence="4">Belongs to the complex I subunit 4L family.</text>
</comment>
<feature type="chain" id="PRO_0000274994" description="NADH-ubiquinone oxidoreductase chain 4L">
    <location>
        <begin position="1"/>
        <end position="98"/>
    </location>
</feature>
<feature type="transmembrane region" description="Helical" evidence="3">
    <location>
        <begin position="29"/>
        <end position="49"/>
    </location>
</feature>
<feature type="transmembrane region" description="Helical" evidence="3">
    <location>
        <begin position="61"/>
        <end position="81"/>
    </location>
</feature>
<keyword id="KW-0249">Electron transport</keyword>
<keyword id="KW-0472">Membrane</keyword>
<keyword id="KW-0496">Mitochondrion</keyword>
<keyword id="KW-0999">Mitochondrion inner membrane</keyword>
<keyword id="KW-0520">NAD</keyword>
<keyword id="KW-0679">Respiratory chain</keyword>
<keyword id="KW-1278">Translocase</keyword>
<keyword id="KW-0812">Transmembrane</keyword>
<keyword id="KW-1133">Transmembrane helix</keyword>
<keyword id="KW-0813">Transport</keyword>
<keyword id="KW-0830">Ubiquinone</keyword>
<gene>
    <name type="primary">MT-ND4L</name>
    <name type="synonym">MTND4L</name>
    <name type="synonym">NADH4L</name>
    <name type="synonym">ND4L</name>
</gene>
<proteinExistence type="inferred from homology"/>